<keyword id="KW-0997">Cell inner membrane</keyword>
<keyword id="KW-1003">Cell membrane</keyword>
<keyword id="KW-0472">Membrane</keyword>
<keyword id="KW-1185">Reference proteome</keyword>
<keyword id="KW-0677">Repeat</keyword>
<keyword id="KW-0812">Transmembrane</keyword>
<keyword id="KW-1133">Transmembrane helix</keyword>
<keyword id="KW-0813">Transport</keyword>
<reference key="1">
    <citation type="journal article" date="1995" name="Science">
        <title>Whole-genome random sequencing and assembly of Haemophilus influenzae Rd.</title>
        <authorList>
            <person name="Fleischmann R.D."/>
            <person name="Adams M.D."/>
            <person name="White O."/>
            <person name="Clayton R.A."/>
            <person name="Kirkness E.F."/>
            <person name="Kerlavage A.R."/>
            <person name="Bult C.J."/>
            <person name="Tomb J.-F."/>
            <person name="Dougherty B.A."/>
            <person name="Merrick J.M."/>
            <person name="McKenney K."/>
            <person name="Sutton G.G."/>
            <person name="FitzHugh W."/>
            <person name="Fields C.A."/>
            <person name="Gocayne J.D."/>
            <person name="Scott J.D."/>
            <person name="Shirley R."/>
            <person name="Liu L.-I."/>
            <person name="Glodek A."/>
            <person name="Kelley J.M."/>
            <person name="Weidman J.F."/>
            <person name="Phillips C.A."/>
            <person name="Spriggs T."/>
            <person name="Hedblom E."/>
            <person name="Cotton M.D."/>
            <person name="Utterback T.R."/>
            <person name="Hanna M.C."/>
            <person name="Nguyen D.T."/>
            <person name="Saudek D.M."/>
            <person name="Brandon R.C."/>
            <person name="Fine L.D."/>
            <person name="Fritchman J.L."/>
            <person name="Fuhrmann J.L."/>
            <person name="Geoghagen N.S.M."/>
            <person name="Gnehm C.L."/>
            <person name="McDonald L.A."/>
            <person name="Small K.V."/>
            <person name="Fraser C.M."/>
            <person name="Smith H.O."/>
            <person name="Venter J.C."/>
        </authorList>
    </citation>
    <scope>NUCLEOTIDE SEQUENCE [LARGE SCALE GENOMIC DNA]</scope>
    <source>
        <strain>ATCC 51907 / DSM 11121 / KW20 / Rd</strain>
    </source>
</reference>
<accession>P44985</accession>
<feature type="chain" id="PRO_0000060231" description="Thiamine transport system permease protein ThiP">
    <location>
        <begin position="1"/>
        <end position="538"/>
    </location>
</feature>
<feature type="transmembrane region" description="Helical" evidence="4">
    <location>
        <begin position="19"/>
        <end position="39"/>
    </location>
</feature>
<feature type="transmembrane region" description="Helical" evidence="4">
    <location>
        <begin position="57"/>
        <end position="77"/>
    </location>
</feature>
<feature type="transmembrane region" description="Helical" evidence="4">
    <location>
        <begin position="97"/>
        <end position="117"/>
    </location>
</feature>
<feature type="transmembrane region" description="Helical" evidence="4">
    <location>
        <begin position="141"/>
        <end position="161"/>
    </location>
</feature>
<feature type="transmembrane region" description="Helical" evidence="4">
    <location>
        <begin position="202"/>
        <end position="222"/>
    </location>
</feature>
<feature type="transmembrane region" description="Helical" evidence="4">
    <location>
        <begin position="242"/>
        <end position="262"/>
    </location>
</feature>
<feature type="transmembrane region" description="Helical" evidence="4">
    <location>
        <begin position="293"/>
        <end position="313"/>
    </location>
</feature>
<feature type="transmembrane region" description="Helical" evidence="4">
    <location>
        <begin position="337"/>
        <end position="357"/>
    </location>
</feature>
<feature type="transmembrane region" description="Helical" evidence="4">
    <location>
        <begin position="376"/>
        <end position="396"/>
    </location>
</feature>
<feature type="transmembrane region" description="Helical" evidence="4">
    <location>
        <begin position="406"/>
        <end position="426"/>
    </location>
</feature>
<feature type="transmembrane region" description="Helical" evidence="4">
    <location>
        <begin position="466"/>
        <end position="486"/>
    </location>
</feature>
<feature type="transmembrane region" description="Helical" evidence="4">
    <location>
        <begin position="509"/>
        <end position="529"/>
    </location>
</feature>
<feature type="domain" description="ABC transmembrane type-1 1" evidence="4">
    <location>
        <begin position="58"/>
        <end position="263"/>
    </location>
</feature>
<feature type="domain" description="ABC transmembrane type-1 2" evidence="4">
    <location>
        <begin position="333"/>
        <end position="528"/>
    </location>
</feature>
<comment type="function">
    <text evidence="2">Part of the ABC transporter complex ThiBPQ involved in thiamine import. Probably responsible for the translocation of the substrate across the membrane.</text>
</comment>
<comment type="subunit">
    <text evidence="2">The complex is composed of two ATP-binding proteins (ThiQ), two transmembrane proteins (ThiP) and a solute-binding protein (ThiB).</text>
</comment>
<comment type="subcellular location">
    <subcellularLocation>
        <location evidence="1">Cell inner membrane</location>
        <topology evidence="3">Multi-pass membrane protein</topology>
    </subcellularLocation>
</comment>
<comment type="similarity">
    <text evidence="5">Belongs to the binding-protein-dependent transport system permease family. CysTW subfamily.</text>
</comment>
<sequence>MFSLFHHPQLRPRHYAGGVVVISFIILFYGGALSSIFALGGELQWRAWFTDDYLQHLILFSFGQALLSTVLSIFFGLLLARALFYKPFLGKKWLLKLMSLTFVLPALVVIFGLIGIYGSSGWLAWLANLFGMSWQGHIYGLSGILIAHLFFNIPLAAQLFLQSLQSIPYQQRQLAAQLNLQGWQFVKLVEWPVFRQQCLPTFSLIFMLCFTSFTVVLTLGGGPQYTTLETAIYQAILFEFDLPKAALFAMLQFVFCLILFSLTSRFSLSNQNGLSNSNIWFEKPKSAVKIFHILVLLVFVFFLFSPVLNILISALSSSNLLTVWHNSQLWRALGYSLSIAPLSALLALTMAIALLLLSRRLEWLHYQKISQFIINAGMVILAIPILVLAMGLFLLLQDRDFSNIDLFIIVVFCNALSAMPFVLRILSAPFHNNMRYYENLCNSLGIVGWQRFYLIEWKTLRAPLRYAFALGLALSLGDFTAIALFGNQEFTSLPHLLYQQLGNYRNQDAAVTAGILLLLCGILFAFIHTYRDADDLSK</sequence>
<protein>
    <recommendedName>
        <fullName>Thiamine transport system permease protein ThiP</fullName>
    </recommendedName>
</protein>
<dbReference type="EMBL" id="L42023">
    <property type="protein sequence ID" value="AAC22679.1"/>
    <property type="molecule type" value="Genomic_DNA"/>
</dbReference>
<dbReference type="PIR" id="D64164">
    <property type="entry name" value="D64164"/>
</dbReference>
<dbReference type="RefSeq" id="NP_439180.1">
    <property type="nucleotide sequence ID" value="NC_000907.1"/>
</dbReference>
<dbReference type="SMR" id="P44985"/>
<dbReference type="STRING" id="71421.HI_1020"/>
<dbReference type="EnsemblBacteria" id="AAC22679">
    <property type="protein sequence ID" value="AAC22679"/>
    <property type="gene ID" value="HI_1020"/>
</dbReference>
<dbReference type="KEGG" id="hin:HI_1020"/>
<dbReference type="PATRIC" id="fig|71421.8.peg.1064"/>
<dbReference type="eggNOG" id="COG1178">
    <property type="taxonomic scope" value="Bacteria"/>
</dbReference>
<dbReference type="HOGENOM" id="CLU_021838_5_3_6"/>
<dbReference type="OrthoDB" id="7066776at2"/>
<dbReference type="PhylomeDB" id="P44985"/>
<dbReference type="BioCyc" id="HINF71421:G1GJ1-1060-MONOMER"/>
<dbReference type="Proteomes" id="UP000000579">
    <property type="component" value="Chromosome"/>
</dbReference>
<dbReference type="GO" id="GO:0005886">
    <property type="term" value="C:plasma membrane"/>
    <property type="evidence" value="ECO:0000318"/>
    <property type="project" value="GO_Central"/>
</dbReference>
<dbReference type="GO" id="GO:0022857">
    <property type="term" value="F:transmembrane transporter activity"/>
    <property type="evidence" value="ECO:0007669"/>
    <property type="project" value="InterPro"/>
</dbReference>
<dbReference type="GO" id="GO:0015888">
    <property type="term" value="P:thiamine transport"/>
    <property type="evidence" value="ECO:0007669"/>
    <property type="project" value="InterPro"/>
</dbReference>
<dbReference type="CDD" id="cd06261">
    <property type="entry name" value="TM_PBP2"/>
    <property type="match status" value="2"/>
</dbReference>
<dbReference type="Gene3D" id="1.10.3720.10">
    <property type="entry name" value="MetI-like"/>
    <property type="match status" value="2"/>
</dbReference>
<dbReference type="InterPro" id="IPR000515">
    <property type="entry name" value="MetI-like"/>
</dbReference>
<dbReference type="InterPro" id="IPR035906">
    <property type="entry name" value="MetI-like_sf"/>
</dbReference>
<dbReference type="InterPro" id="IPR005947">
    <property type="entry name" value="ThiP_ABC_transpt"/>
</dbReference>
<dbReference type="NCBIfam" id="NF006952">
    <property type="entry name" value="PRK09433.1-3"/>
    <property type="match status" value="1"/>
</dbReference>
<dbReference type="NCBIfam" id="TIGR01253">
    <property type="entry name" value="thiP"/>
    <property type="match status" value="1"/>
</dbReference>
<dbReference type="PANTHER" id="PTHR30183">
    <property type="entry name" value="MOLYBDENUM TRANSPORT SYSTEM PERMEASE PROTEIN MODB"/>
    <property type="match status" value="1"/>
</dbReference>
<dbReference type="PANTHER" id="PTHR30183:SF3">
    <property type="entry name" value="MOLYBDENUM TRANSPORT SYSTEM PERMEASE PROTEIN MODB"/>
    <property type="match status" value="1"/>
</dbReference>
<dbReference type="Pfam" id="PF00528">
    <property type="entry name" value="BPD_transp_1"/>
    <property type="match status" value="2"/>
</dbReference>
<dbReference type="SUPFAM" id="SSF161098">
    <property type="entry name" value="MetI-like"/>
    <property type="match status" value="2"/>
</dbReference>
<dbReference type="PROSITE" id="PS50928">
    <property type="entry name" value="ABC_TM1"/>
    <property type="match status" value="2"/>
</dbReference>
<name>THIP_HAEIN</name>
<evidence type="ECO:0000250" key="1">
    <source>
        <dbReference type="UniProtKB" id="P31549"/>
    </source>
</evidence>
<evidence type="ECO:0000250" key="2">
    <source>
        <dbReference type="UniProtKB" id="Q8ZRV1"/>
    </source>
</evidence>
<evidence type="ECO:0000255" key="3"/>
<evidence type="ECO:0000255" key="4">
    <source>
        <dbReference type="PROSITE-ProRule" id="PRU00441"/>
    </source>
</evidence>
<evidence type="ECO:0000305" key="5"/>
<proteinExistence type="inferred from homology"/>
<organism>
    <name type="scientific">Haemophilus influenzae (strain ATCC 51907 / DSM 11121 / KW20 / Rd)</name>
    <dbReference type="NCBI Taxonomy" id="71421"/>
    <lineage>
        <taxon>Bacteria</taxon>
        <taxon>Pseudomonadati</taxon>
        <taxon>Pseudomonadota</taxon>
        <taxon>Gammaproteobacteria</taxon>
        <taxon>Pasteurellales</taxon>
        <taxon>Pasteurellaceae</taxon>
        <taxon>Haemophilus</taxon>
    </lineage>
</organism>
<gene>
    <name type="primary">thiP</name>
    <name type="ordered locus">HI_1020</name>
</gene>